<evidence type="ECO:0000255" key="1">
    <source>
        <dbReference type="HAMAP-Rule" id="MF_01341"/>
    </source>
</evidence>
<evidence type="ECO:0000256" key="2">
    <source>
        <dbReference type="SAM" id="MobiDB-lite"/>
    </source>
</evidence>
<evidence type="ECO:0000305" key="3"/>
<accession>B0B885</accession>
<accession>O84518</accession>
<accession>P28534</accession>
<protein>
    <recommendedName>
        <fullName evidence="1">Large ribosomal subunit protein uL15</fullName>
    </recommendedName>
    <alternativeName>
        <fullName evidence="3">50S ribosomal protein L15</fullName>
    </alternativeName>
</protein>
<gene>
    <name evidence="1" type="primary">rplO</name>
    <name type="ordered locus">CTL0773</name>
</gene>
<organism>
    <name type="scientific">Chlamydia trachomatis serovar L2 (strain ATCC VR-902B / DSM 19102 / 434/Bu)</name>
    <dbReference type="NCBI Taxonomy" id="471472"/>
    <lineage>
        <taxon>Bacteria</taxon>
        <taxon>Pseudomonadati</taxon>
        <taxon>Chlamydiota</taxon>
        <taxon>Chlamydiia</taxon>
        <taxon>Chlamydiales</taxon>
        <taxon>Chlamydiaceae</taxon>
        <taxon>Chlamydia/Chlamydophila group</taxon>
        <taxon>Chlamydia</taxon>
    </lineage>
</organism>
<feature type="chain" id="PRO_1000142791" description="Large ribosomal subunit protein uL15">
    <location>
        <begin position="1"/>
        <end position="144"/>
    </location>
</feature>
<feature type="region of interest" description="Disordered" evidence="2">
    <location>
        <begin position="1"/>
        <end position="48"/>
    </location>
</feature>
<dbReference type="EMBL" id="M80325">
    <property type="protein sequence ID" value="AAA23179.1"/>
    <property type="molecule type" value="Genomic_DNA"/>
</dbReference>
<dbReference type="EMBL" id="AM884176">
    <property type="protein sequence ID" value="CAP04211.1"/>
    <property type="molecule type" value="Genomic_DNA"/>
</dbReference>
<dbReference type="EMBL" id="L25077">
    <property type="protein sequence ID" value="AAC36887.1"/>
    <property type="molecule type" value="Unassigned_DNA"/>
</dbReference>
<dbReference type="PIR" id="B45192">
    <property type="entry name" value="B45192"/>
</dbReference>
<dbReference type="RefSeq" id="WP_009871875.1">
    <property type="nucleotide sequence ID" value="NC_010287.1"/>
</dbReference>
<dbReference type="RefSeq" id="YP_001654844.1">
    <property type="nucleotide sequence ID" value="NC_010287.1"/>
</dbReference>
<dbReference type="SMR" id="B0B885"/>
<dbReference type="KEGG" id="ctb:CTL0773"/>
<dbReference type="PATRIC" id="fig|471472.4.peg.829"/>
<dbReference type="HOGENOM" id="CLU_055188_4_2_0"/>
<dbReference type="Proteomes" id="UP001154402">
    <property type="component" value="Chromosome"/>
</dbReference>
<dbReference type="GO" id="GO:0022625">
    <property type="term" value="C:cytosolic large ribosomal subunit"/>
    <property type="evidence" value="ECO:0007669"/>
    <property type="project" value="TreeGrafter"/>
</dbReference>
<dbReference type="GO" id="GO:0019843">
    <property type="term" value="F:rRNA binding"/>
    <property type="evidence" value="ECO:0007669"/>
    <property type="project" value="UniProtKB-UniRule"/>
</dbReference>
<dbReference type="GO" id="GO:0003735">
    <property type="term" value="F:structural constituent of ribosome"/>
    <property type="evidence" value="ECO:0007669"/>
    <property type="project" value="InterPro"/>
</dbReference>
<dbReference type="GO" id="GO:0006412">
    <property type="term" value="P:translation"/>
    <property type="evidence" value="ECO:0007669"/>
    <property type="project" value="UniProtKB-UniRule"/>
</dbReference>
<dbReference type="Gene3D" id="3.100.10.10">
    <property type="match status" value="1"/>
</dbReference>
<dbReference type="HAMAP" id="MF_01341">
    <property type="entry name" value="Ribosomal_uL15"/>
    <property type="match status" value="1"/>
</dbReference>
<dbReference type="InterPro" id="IPR030878">
    <property type="entry name" value="Ribosomal_uL15"/>
</dbReference>
<dbReference type="InterPro" id="IPR021131">
    <property type="entry name" value="Ribosomal_uL15/eL18"/>
</dbReference>
<dbReference type="InterPro" id="IPR036227">
    <property type="entry name" value="Ribosomal_uL15/eL18_sf"/>
</dbReference>
<dbReference type="InterPro" id="IPR005749">
    <property type="entry name" value="Ribosomal_uL15_bac-type"/>
</dbReference>
<dbReference type="NCBIfam" id="TIGR01071">
    <property type="entry name" value="rplO_bact"/>
    <property type="match status" value="1"/>
</dbReference>
<dbReference type="PANTHER" id="PTHR12934">
    <property type="entry name" value="50S RIBOSOMAL PROTEIN L15"/>
    <property type="match status" value="1"/>
</dbReference>
<dbReference type="PANTHER" id="PTHR12934:SF11">
    <property type="entry name" value="LARGE RIBOSOMAL SUBUNIT PROTEIN UL15M"/>
    <property type="match status" value="1"/>
</dbReference>
<dbReference type="Pfam" id="PF00828">
    <property type="entry name" value="Ribosomal_L27A"/>
    <property type="match status" value="1"/>
</dbReference>
<dbReference type="SUPFAM" id="SSF52080">
    <property type="entry name" value="Ribosomal proteins L15p and L18e"/>
    <property type="match status" value="1"/>
</dbReference>
<keyword id="KW-0687">Ribonucleoprotein</keyword>
<keyword id="KW-0689">Ribosomal protein</keyword>
<keyword id="KW-0694">RNA-binding</keyword>
<keyword id="KW-0699">rRNA-binding</keyword>
<comment type="function">
    <text evidence="1">Binds to the 23S rRNA.</text>
</comment>
<comment type="subunit">
    <text evidence="1">Part of the 50S ribosomal subunit.</text>
</comment>
<comment type="similarity">
    <text evidence="1">Belongs to the universal ribosomal protein uL15 family.</text>
</comment>
<name>RL15_CHLT2</name>
<proteinExistence type="inferred from homology"/>
<reference key="1">
    <citation type="journal article" date="1992" name="J. Bacteriol.">
        <title>Cloning and sequence analysis of the Chlamydia trachomatis spc ribosomal protein gene cluster.</title>
        <authorList>
            <person name="Kaul R."/>
            <person name="Gray G.J."/>
            <person name="Koehncke N.R."/>
            <person name="Gu L.J."/>
        </authorList>
    </citation>
    <scope>NUCLEOTIDE SEQUENCE [GENOMIC DNA]</scope>
</reference>
<reference key="2">
    <citation type="journal article" date="2008" name="Genome Res.">
        <title>Chlamydia trachomatis: genome sequence analysis of lymphogranuloma venereum isolates.</title>
        <authorList>
            <person name="Thomson N.R."/>
            <person name="Holden M.T.G."/>
            <person name="Carder C."/>
            <person name="Lennard N."/>
            <person name="Lockey S.J."/>
            <person name="Marsh P."/>
            <person name="Skipp P."/>
            <person name="O'Connor C.D."/>
            <person name="Goodhead I."/>
            <person name="Norbertzcak H."/>
            <person name="Harris B."/>
            <person name="Ormond D."/>
            <person name="Rance R."/>
            <person name="Quail M.A."/>
            <person name="Parkhill J."/>
            <person name="Stephens R.S."/>
            <person name="Clarke I.N."/>
        </authorList>
    </citation>
    <scope>NUCLEOTIDE SEQUENCE [LARGE SCALE GENOMIC DNA]</scope>
    <source>
        <strain>ATCC VR-902B / DSM 19102 / 434/Bu</strain>
    </source>
</reference>
<reference key="3">
    <citation type="journal article" date="1994" name="Mol. Gen. Genet.">
        <title>Cloning and characterization of a secY homolog from Chlamydia trachomatis.</title>
        <authorList>
            <person name="Gu L.J."/>
            <person name="Remacha M."/>
            <person name="Wenman W.M."/>
            <person name="Kaul R."/>
        </authorList>
    </citation>
    <scope>NUCLEOTIDE SEQUENCE [GENOMIC DNA] OF 97-144</scope>
</reference>
<sequence>MIKLECLQDPSPRKRRTKLLGRGPSSGHGKTSGRGHKGDGSRSGYKRRFGYEGGGVPLYRRVPTRGFSHKRFDKCVEEITTQRLNEIFDNGAEVSLEALKERKVIHRETSRVKVILKGALDKKLVWKDAAIVLSEGVKSLIEAV</sequence>